<gene>
    <name evidence="1" type="primary">purH</name>
    <name type="ordered locus">SpyM3_0024</name>
</gene>
<accession>P0DD60</accession>
<accession>Q8K8Y6</accession>
<keyword id="KW-0378">Hydrolase</keyword>
<keyword id="KW-0511">Multifunctional enzyme</keyword>
<keyword id="KW-0658">Purine biosynthesis</keyword>
<keyword id="KW-0808">Transferase</keyword>
<dbReference type="EC" id="2.1.2.3" evidence="1"/>
<dbReference type="EC" id="3.5.4.10" evidence="1"/>
<dbReference type="EMBL" id="AE014074">
    <property type="protein sequence ID" value="AAM78631.1"/>
    <property type="molecule type" value="Genomic_DNA"/>
</dbReference>
<dbReference type="RefSeq" id="WP_011054093.1">
    <property type="nucleotide sequence ID" value="NC_004070.1"/>
</dbReference>
<dbReference type="SMR" id="P0DD60"/>
<dbReference type="KEGG" id="spg:SpyM3_0024"/>
<dbReference type="HOGENOM" id="CLU_016316_5_2_9"/>
<dbReference type="UniPathway" id="UPA00074">
    <property type="reaction ID" value="UER00133"/>
</dbReference>
<dbReference type="UniPathway" id="UPA00074">
    <property type="reaction ID" value="UER00135"/>
</dbReference>
<dbReference type="Proteomes" id="UP000000564">
    <property type="component" value="Chromosome"/>
</dbReference>
<dbReference type="GO" id="GO:0005829">
    <property type="term" value="C:cytosol"/>
    <property type="evidence" value="ECO:0007669"/>
    <property type="project" value="TreeGrafter"/>
</dbReference>
<dbReference type="GO" id="GO:0003937">
    <property type="term" value="F:IMP cyclohydrolase activity"/>
    <property type="evidence" value="ECO:0007669"/>
    <property type="project" value="UniProtKB-UniRule"/>
</dbReference>
<dbReference type="GO" id="GO:0004643">
    <property type="term" value="F:phosphoribosylaminoimidazolecarboxamide formyltransferase activity"/>
    <property type="evidence" value="ECO:0007669"/>
    <property type="project" value="UniProtKB-UniRule"/>
</dbReference>
<dbReference type="GO" id="GO:0006189">
    <property type="term" value="P:'de novo' IMP biosynthetic process"/>
    <property type="evidence" value="ECO:0007669"/>
    <property type="project" value="UniProtKB-UniRule"/>
</dbReference>
<dbReference type="CDD" id="cd01421">
    <property type="entry name" value="IMPCH"/>
    <property type="match status" value="1"/>
</dbReference>
<dbReference type="FunFam" id="3.40.140.20:FF:000001">
    <property type="entry name" value="Bifunctional purine biosynthesis protein PurH"/>
    <property type="match status" value="1"/>
</dbReference>
<dbReference type="FunFam" id="3.40.140.20:FF:000002">
    <property type="entry name" value="Bifunctional purine biosynthesis protein PurH"/>
    <property type="match status" value="1"/>
</dbReference>
<dbReference type="FunFam" id="3.40.50.1380:FF:000001">
    <property type="entry name" value="Bifunctional purine biosynthesis protein PurH"/>
    <property type="match status" value="1"/>
</dbReference>
<dbReference type="Gene3D" id="3.40.140.20">
    <property type="match status" value="2"/>
</dbReference>
<dbReference type="Gene3D" id="3.40.50.1380">
    <property type="entry name" value="Methylglyoxal synthase-like domain"/>
    <property type="match status" value="1"/>
</dbReference>
<dbReference type="HAMAP" id="MF_00139">
    <property type="entry name" value="PurH"/>
    <property type="match status" value="1"/>
</dbReference>
<dbReference type="InterPro" id="IPR024051">
    <property type="entry name" value="AICAR_Tfase_dup_dom_sf"/>
</dbReference>
<dbReference type="InterPro" id="IPR016193">
    <property type="entry name" value="Cytidine_deaminase-like"/>
</dbReference>
<dbReference type="InterPro" id="IPR011607">
    <property type="entry name" value="MGS-like_dom"/>
</dbReference>
<dbReference type="InterPro" id="IPR036914">
    <property type="entry name" value="MGS-like_dom_sf"/>
</dbReference>
<dbReference type="InterPro" id="IPR002695">
    <property type="entry name" value="PurH-like"/>
</dbReference>
<dbReference type="NCBIfam" id="NF002049">
    <property type="entry name" value="PRK00881.1"/>
    <property type="match status" value="1"/>
</dbReference>
<dbReference type="NCBIfam" id="TIGR00355">
    <property type="entry name" value="purH"/>
    <property type="match status" value="1"/>
</dbReference>
<dbReference type="PANTHER" id="PTHR11692:SF0">
    <property type="entry name" value="BIFUNCTIONAL PURINE BIOSYNTHESIS PROTEIN ATIC"/>
    <property type="match status" value="1"/>
</dbReference>
<dbReference type="PANTHER" id="PTHR11692">
    <property type="entry name" value="BIFUNCTIONAL PURINE BIOSYNTHESIS PROTEIN PURH"/>
    <property type="match status" value="1"/>
</dbReference>
<dbReference type="Pfam" id="PF01808">
    <property type="entry name" value="AICARFT_IMPCHas"/>
    <property type="match status" value="1"/>
</dbReference>
<dbReference type="Pfam" id="PF02142">
    <property type="entry name" value="MGS"/>
    <property type="match status" value="1"/>
</dbReference>
<dbReference type="PIRSF" id="PIRSF000414">
    <property type="entry name" value="AICARFT_IMPCHas"/>
    <property type="match status" value="1"/>
</dbReference>
<dbReference type="SMART" id="SM00798">
    <property type="entry name" value="AICARFT_IMPCHas"/>
    <property type="match status" value="1"/>
</dbReference>
<dbReference type="SMART" id="SM00851">
    <property type="entry name" value="MGS"/>
    <property type="match status" value="1"/>
</dbReference>
<dbReference type="SUPFAM" id="SSF53927">
    <property type="entry name" value="Cytidine deaminase-like"/>
    <property type="match status" value="1"/>
</dbReference>
<dbReference type="SUPFAM" id="SSF52335">
    <property type="entry name" value="Methylglyoxal synthase-like"/>
    <property type="match status" value="1"/>
</dbReference>
<dbReference type="PROSITE" id="PS51855">
    <property type="entry name" value="MGS"/>
    <property type="match status" value="1"/>
</dbReference>
<comment type="catalytic activity">
    <reaction evidence="1">
        <text>(6R)-10-formyltetrahydrofolate + 5-amino-1-(5-phospho-beta-D-ribosyl)imidazole-4-carboxamide = 5-formamido-1-(5-phospho-D-ribosyl)imidazole-4-carboxamide + (6S)-5,6,7,8-tetrahydrofolate</text>
        <dbReference type="Rhea" id="RHEA:22192"/>
        <dbReference type="ChEBI" id="CHEBI:57453"/>
        <dbReference type="ChEBI" id="CHEBI:58467"/>
        <dbReference type="ChEBI" id="CHEBI:58475"/>
        <dbReference type="ChEBI" id="CHEBI:195366"/>
        <dbReference type="EC" id="2.1.2.3"/>
    </reaction>
</comment>
<comment type="catalytic activity">
    <reaction evidence="1">
        <text>IMP + H2O = 5-formamido-1-(5-phospho-D-ribosyl)imidazole-4-carboxamide</text>
        <dbReference type="Rhea" id="RHEA:18445"/>
        <dbReference type="ChEBI" id="CHEBI:15377"/>
        <dbReference type="ChEBI" id="CHEBI:58053"/>
        <dbReference type="ChEBI" id="CHEBI:58467"/>
        <dbReference type="EC" id="3.5.4.10"/>
    </reaction>
</comment>
<comment type="pathway">
    <text evidence="1">Purine metabolism; IMP biosynthesis via de novo pathway; 5-formamido-1-(5-phospho-D-ribosyl)imidazole-4-carboxamide from 5-amino-1-(5-phospho-D-ribosyl)imidazole-4-carboxamide (10-formyl THF route): step 1/1.</text>
</comment>
<comment type="pathway">
    <text evidence="1">Purine metabolism; IMP biosynthesis via de novo pathway; IMP from 5-formamido-1-(5-phospho-D-ribosyl)imidazole-4-carboxamide: step 1/1.</text>
</comment>
<comment type="domain">
    <text evidence="1">The IMP cyclohydrolase activity resides in the N-terminal region.</text>
</comment>
<comment type="similarity">
    <text evidence="1">Belongs to the PurH family.</text>
</comment>
<name>PUR9_STRP3</name>
<organism>
    <name type="scientific">Streptococcus pyogenes serotype M3 (strain ATCC BAA-595 / MGAS315)</name>
    <dbReference type="NCBI Taxonomy" id="198466"/>
    <lineage>
        <taxon>Bacteria</taxon>
        <taxon>Bacillati</taxon>
        <taxon>Bacillota</taxon>
        <taxon>Bacilli</taxon>
        <taxon>Lactobacillales</taxon>
        <taxon>Streptococcaceae</taxon>
        <taxon>Streptococcus</taxon>
    </lineage>
</organism>
<protein>
    <recommendedName>
        <fullName evidence="1">Bifunctional purine biosynthesis protein PurH</fullName>
    </recommendedName>
    <domain>
        <recommendedName>
            <fullName evidence="1">Phosphoribosylaminoimidazolecarboxamide formyltransferase</fullName>
            <ecNumber evidence="1">2.1.2.3</ecNumber>
        </recommendedName>
        <alternativeName>
            <fullName evidence="1">AICAR transformylase</fullName>
        </alternativeName>
    </domain>
    <domain>
        <recommendedName>
            <fullName evidence="1">IMP cyclohydrolase</fullName>
            <ecNumber evidence="1">3.5.4.10</ecNumber>
        </recommendedName>
        <alternativeName>
            <fullName evidence="1">ATIC</fullName>
        </alternativeName>
        <alternativeName>
            <fullName evidence="1">IMP synthase</fullName>
        </alternativeName>
        <alternativeName>
            <fullName evidence="1">Inosinicase</fullName>
        </alternativeName>
    </domain>
</protein>
<evidence type="ECO:0000255" key="1">
    <source>
        <dbReference type="HAMAP-Rule" id="MF_00139"/>
    </source>
</evidence>
<evidence type="ECO:0000255" key="2">
    <source>
        <dbReference type="PROSITE-ProRule" id="PRU01202"/>
    </source>
</evidence>
<feature type="chain" id="PRO_0000192136" description="Bifunctional purine biosynthesis protein PurH">
    <location>
        <begin position="1"/>
        <end position="515"/>
    </location>
</feature>
<feature type="domain" description="MGS-like" evidence="2">
    <location>
        <begin position="1"/>
        <end position="145"/>
    </location>
</feature>
<sequence>MTKRALISVSDKSGIVDFAKELKNLGWDIISTGGTKVALDNAGVETIAIDDVTGFPEMMDGRVKTLHPNIHGGLLARRDADSHLQAAKDNNIELIDLVVVNLYPFKETILRPDITYDLAVENIDIGGPSMLRSAAKNHASVTVVVDPADYATVLGELADAGQTTFETRQRLAAKVFRHTAAYDALIAEYFTTQVGEAKPEKLTITYDLKQAMRYGENPQQDADFYQKALPIDYSIASAKQLNGKELSFNNIRDADAAIRIIRDFKDRPTVVVLKHMNPCGIGQADDIETAWDYAYEADPVSIFGGIVVLNREVDAATAKKMHPIFLEIIIAPSYSEEALAILTNKKKNLRILELPFDAQAASEVEAEYTGVVGGLLVQNQDVVAENPSDWQVVTDRQPTEQEATALEFAWKAIKYVKSNGIIITNDHMTLGLGAGQTNRVGSVKIAIEQAKDHLDGAVLASDAFFPFADNIEEIAAAGIKAIIQPGGSVRDQDSIDAANKHGLTMIFTGVRHFRH</sequence>
<reference key="1">
    <citation type="journal article" date="2002" name="Proc. Natl. Acad. Sci. U.S.A.">
        <title>Genome sequence of a serotype M3 strain of group A Streptococcus: phage-encoded toxins, the high-virulence phenotype, and clone emergence.</title>
        <authorList>
            <person name="Beres S.B."/>
            <person name="Sylva G.L."/>
            <person name="Barbian K.D."/>
            <person name="Lei B."/>
            <person name="Hoff J.S."/>
            <person name="Mammarella N.D."/>
            <person name="Liu M.-Y."/>
            <person name="Smoot J.C."/>
            <person name="Porcella S.F."/>
            <person name="Parkins L.D."/>
            <person name="Campbell D.S."/>
            <person name="Smith T.M."/>
            <person name="McCormick J.K."/>
            <person name="Leung D.Y.M."/>
            <person name="Schlievert P.M."/>
            <person name="Musser J.M."/>
        </authorList>
    </citation>
    <scope>NUCLEOTIDE SEQUENCE [LARGE SCALE GENOMIC DNA]</scope>
    <source>
        <strain>ATCC BAA-595 / MGAS315</strain>
    </source>
</reference>
<proteinExistence type="inferred from homology"/>